<organism>
    <name type="scientific">Nitrosomonas europaea (strain ATCC 19718 / CIP 103999 / KCTC 2705 / NBRC 14298)</name>
    <dbReference type="NCBI Taxonomy" id="228410"/>
    <lineage>
        <taxon>Bacteria</taxon>
        <taxon>Pseudomonadati</taxon>
        <taxon>Pseudomonadota</taxon>
        <taxon>Betaproteobacteria</taxon>
        <taxon>Nitrosomonadales</taxon>
        <taxon>Nitrosomonadaceae</taxon>
        <taxon>Nitrosomonas</taxon>
    </lineage>
</organism>
<evidence type="ECO:0000250" key="1"/>
<evidence type="ECO:0000305" key="2"/>
<reference key="1">
    <citation type="journal article" date="2003" name="J. Bacteriol.">
        <title>Complete genome sequence of the ammonia-oxidizing bacterium and obligate chemolithoautotroph Nitrosomonas europaea.</title>
        <authorList>
            <person name="Chain P."/>
            <person name="Lamerdin J.E."/>
            <person name="Larimer F.W."/>
            <person name="Regala W."/>
            <person name="Lao V."/>
            <person name="Land M.L."/>
            <person name="Hauser L."/>
            <person name="Hooper A.B."/>
            <person name="Klotz M.G."/>
            <person name="Norton J."/>
            <person name="Sayavedra-Soto L.A."/>
            <person name="Arciero D.M."/>
            <person name="Hommes N.G."/>
            <person name="Whittaker M.M."/>
            <person name="Arp D.J."/>
        </authorList>
    </citation>
    <scope>NUCLEOTIDE SEQUENCE [LARGE SCALE GENOMIC DNA]</scope>
    <source>
        <strain>ATCC 19718 / CIP 103999 / KCTC 2705 / NBRC 14298</strain>
    </source>
</reference>
<protein>
    <recommendedName>
        <fullName>Tetraacyldisaccharide 4'-kinase</fullName>
        <ecNumber>2.7.1.130</ecNumber>
    </recommendedName>
    <alternativeName>
        <fullName>Lipid A 4'-kinase</fullName>
    </alternativeName>
</protein>
<comment type="function">
    <text evidence="1">Transfers the gamma-phosphate of ATP to the 4'-position of a tetraacyldisaccharide 1-phosphate intermediate (termed DS-1-P) to form tetraacyldisaccharide 1,4'-bis-phosphate (lipid IVA).</text>
</comment>
<comment type="catalytic activity">
    <reaction>
        <text>a lipid A disaccharide + ATP = a lipid IVA + ADP + H(+)</text>
        <dbReference type="Rhea" id="RHEA:67840"/>
        <dbReference type="ChEBI" id="CHEBI:15378"/>
        <dbReference type="ChEBI" id="CHEBI:30616"/>
        <dbReference type="ChEBI" id="CHEBI:176343"/>
        <dbReference type="ChEBI" id="CHEBI:176425"/>
        <dbReference type="ChEBI" id="CHEBI:456216"/>
        <dbReference type="EC" id="2.7.1.130"/>
    </reaction>
</comment>
<comment type="pathway">
    <text>Glycolipid biosynthesis; lipid IV(A) biosynthesis; lipid IV(A) from (3R)-3-hydroxytetradecanoyl-[acyl-carrier-protein] and UDP-N-acetyl-alpha-D-glucosamine: step 6/6.</text>
</comment>
<comment type="similarity">
    <text evidence="2">In the N-terminal section; belongs to the LpxK family.</text>
</comment>
<comment type="similarity">
    <text evidence="2">In the C-terminal section; belongs to the UPF0434 family.</text>
</comment>
<comment type="caution">
    <text evidence="2">Lacks the conserved motif Gly-Gly-x-Gly-Lys-Thr that is the consensus ATP-binding site for this enzyme.</text>
</comment>
<sequence length="396" mass="45501">MNWYELYWQRITPLHLFLWPVSQLLILFQSVRRFLYRRAILTSIHLPVPIIIIDSITTDSPVKTSLIIQIANILKAAGLRPGIISRGYPDNHRPPTRVTISSHPHLTGEKSLLLTYHLRETCPVWIGYDRIETAKALLNAHKECNVLICDDGLQDLRLQRDFEAVIVDTSVINSGNGLIMPAGPLRDSFARLKHTDAVILAGHQRRIPDITDEIRTIHTRPQKEHFFNLSWPELTADAAGLAGKRIHAIVCDPDTQNFLDNLEFLKLTVTPRVFPENHHFIATDFQSDEAEIILIPEEDAVKCLSLHDDRIWVLQQEYRVDPGLREIILKKLREKFMDPKLLDILVCPLCKGSLIYKKDRLELICKADRLAYPIRDGIPVMLEDEARKLPDEEEIK</sequence>
<proteinExistence type="inferred from homology"/>
<accession>Q82SY2</accession>
<keyword id="KW-0067">ATP-binding</keyword>
<keyword id="KW-0418">Kinase</keyword>
<keyword id="KW-0441">Lipid A biosynthesis</keyword>
<keyword id="KW-0444">Lipid biosynthesis</keyword>
<keyword id="KW-0443">Lipid metabolism</keyword>
<keyword id="KW-0547">Nucleotide-binding</keyword>
<keyword id="KW-1185">Reference proteome</keyword>
<keyword id="KW-0808">Transferase</keyword>
<name>LPXK_NITEU</name>
<dbReference type="EC" id="2.7.1.130"/>
<dbReference type="EMBL" id="AL954747">
    <property type="protein sequence ID" value="CAD86075.1"/>
    <property type="molecule type" value="Genomic_DNA"/>
</dbReference>
<dbReference type="SMR" id="Q82SY2"/>
<dbReference type="STRING" id="228410.NE2164"/>
<dbReference type="KEGG" id="neu:NE2164"/>
<dbReference type="eggNOG" id="COG1663">
    <property type="taxonomic scope" value="Bacteria"/>
</dbReference>
<dbReference type="eggNOG" id="COG2835">
    <property type="taxonomic scope" value="Bacteria"/>
</dbReference>
<dbReference type="HOGENOM" id="CLU_038816_2_0_4"/>
<dbReference type="OrthoDB" id="9766423at2"/>
<dbReference type="PhylomeDB" id="Q82SY2"/>
<dbReference type="UniPathway" id="UPA00359">
    <property type="reaction ID" value="UER00482"/>
</dbReference>
<dbReference type="Proteomes" id="UP000001416">
    <property type="component" value="Chromosome"/>
</dbReference>
<dbReference type="GO" id="GO:0005886">
    <property type="term" value="C:plasma membrane"/>
    <property type="evidence" value="ECO:0007669"/>
    <property type="project" value="TreeGrafter"/>
</dbReference>
<dbReference type="GO" id="GO:0005524">
    <property type="term" value="F:ATP binding"/>
    <property type="evidence" value="ECO:0007669"/>
    <property type="project" value="UniProtKB-UniRule"/>
</dbReference>
<dbReference type="GO" id="GO:0009029">
    <property type="term" value="F:tetraacyldisaccharide 4'-kinase activity"/>
    <property type="evidence" value="ECO:0007669"/>
    <property type="project" value="UniProtKB-UniRule"/>
</dbReference>
<dbReference type="GO" id="GO:0009245">
    <property type="term" value="P:lipid A biosynthetic process"/>
    <property type="evidence" value="ECO:0007669"/>
    <property type="project" value="UniProtKB-UniRule"/>
</dbReference>
<dbReference type="GO" id="GO:0009244">
    <property type="term" value="P:lipopolysaccharide core region biosynthetic process"/>
    <property type="evidence" value="ECO:0007669"/>
    <property type="project" value="TreeGrafter"/>
</dbReference>
<dbReference type="FunFam" id="2.20.25.10:FF:000002">
    <property type="entry name" value="UPF0434 protein YcaR"/>
    <property type="match status" value="1"/>
</dbReference>
<dbReference type="Gene3D" id="2.20.25.10">
    <property type="match status" value="1"/>
</dbReference>
<dbReference type="HAMAP" id="MF_00409">
    <property type="entry name" value="LpxK"/>
    <property type="match status" value="1"/>
</dbReference>
<dbReference type="HAMAP" id="MF_01187">
    <property type="entry name" value="UPF0434"/>
    <property type="match status" value="1"/>
</dbReference>
<dbReference type="InterPro" id="IPR003758">
    <property type="entry name" value="LpxK"/>
</dbReference>
<dbReference type="InterPro" id="IPR005651">
    <property type="entry name" value="Trm112-like"/>
</dbReference>
<dbReference type="NCBIfam" id="TIGR00682">
    <property type="entry name" value="lpxK"/>
    <property type="match status" value="1"/>
</dbReference>
<dbReference type="PANTHER" id="PTHR42724">
    <property type="entry name" value="TETRAACYLDISACCHARIDE 4'-KINASE"/>
    <property type="match status" value="1"/>
</dbReference>
<dbReference type="PANTHER" id="PTHR42724:SF1">
    <property type="entry name" value="TETRAACYLDISACCHARIDE 4'-KINASE, MITOCHONDRIAL-RELATED"/>
    <property type="match status" value="1"/>
</dbReference>
<dbReference type="Pfam" id="PF02606">
    <property type="entry name" value="LpxK"/>
    <property type="match status" value="1"/>
</dbReference>
<dbReference type="Pfam" id="PF03966">
    <property type="entry name" value="Trm112p"/>
    <property type="match status" value="1"/>
</dbReference>
<dbReference type="SUPFAM" id="SSF158997">
    <property type="entry name" value="Trm112p-like"/>
    <property type="match status" value="1"/>
</dbReference>
<gene>
    <name type="primary">lpxK</name>
    <name type="ordered locus">NE2164</name>
</gene>
<feature type="chain" id="PRO_0000291218" description="Tetraacyldisaccharide 4'-kinase">
    <location>
        <begin position="1"/>
        <end position="396"/>
    </location>
</feature>
<feature type="region of interest" description="Tetraacyldisaccharide 4'-kinase">
    <location>
        <begin position="1"/>
        <end position="336"/>
    </location>
</feature>
<feature type="region of interest" description="UPF0434">
    <location>
        <begin position="337"/>
        <end position="396"/>
    </location>
</feature>